<name>UXAC_THENN</name>
<evidence type="ECO:0000255" key="1">
    <source>
        <dbReference type="HAMAP-Rule" id="MF_00675"/>
    </source>
</evidence>
<accession>B9K773</accession>
<feature type="chain" id="PRO_1000147695" description="Uronate isomerase">
    <location>
        <begin position="1"/>
        <end position="451"/>
    </location>
</feature>
<proteinExistence type="inferred from homology"/>
<keyword id="KW-0413">Isomerase</keyword>
<gene>
    <name evidence="1" type="primary">uxaC</name>
    <name type="ordered locus">CTN_0630</name>
</gene>
<organism>
    <name type="scientific">Thermotoga neapolitana (strain ATCC 49049 / DSM 4359 / NBRC 107923 / NS-E)</name>
    <dbReference type="NCBI Taxonomy" id="309803"/>
    <lineage>
        <taxon>Bacteria</taxon>
        <taxon>Thermotogati</taxon>
        <taxon>Thermotogota</taxon>
        <taxon>Thermotogae</taxon>
        <taxon>Thermotogales</taxon>
        <taxon>Thermotogaceae</taxon>
        <taxon>Thermotoga</taxon>
    </lineage>
</organism>
<sequence>MFLGEDYLLTNRAAVRLFSEVKDLPIVDPHNHLDAKDIVENKPWNDIWEVEGATDHYVWELMRRCGVPEEYITGSRSNREKWLALAKVFPKFVGNPTYEWIHLDLWRRFNVKKVISEETAEEIWEETKRMLPEMTPQKLLKDMKVEILCTTDDPISTLEYHRKARETIKDVTILPTWRPDRAMNVEKSDWKDYVKKIGEIYNEDTSTLEGFLSALWKSHEHFKEHGCVASDHALLEPSIHFVGEKTARKIHEKVFRGKELDPEEIRDYKAFMMVQFGKMNQETGWVTQLHIGALRDYRDSLLKTLGPDSGGDISTNFLKIAEGLRYFLNEFDGKLKIVLYVLDPTHLPTIATIARAFPNVYIGAPWWFNDSPFGMEMHLKYVASVDLLYNLAGMVTDSRKLLSFGSRTEMFRRVLSSVVGEMVERGQIPIREAKELVKHVCYDGPKALFFG</sequence>
<comment type="catalytic activity">
    <reaction evidence="1">
        <text>D-glucuronate = D-fructuronate</text>
        <dbReference type="Rhea" id="RHEA:13049"/>
        <dbReference type="ChEBI" id="CHEBI:58720"/>
        <dbReference type="ChEBI" id="CHEBI:59863"/>
        <dbReference type="EC" id="5.3.1.12"/>
    </reaction>
</comment>
<comment type="catalytic activity">
    <reaction evidence="1">
        <text>aldehydo-D-galacturonate = keto-D-tagaturonate</text>
        <dbReference type="Rhea" id="RHEA:27702"/>
        <dbReference type="ChEBI" id="CHEBI:12952"/>
        <dbReference type="ChEBI" id="CHEBI:17886"/>
        <dbReference type="EC" id="5.3.1.12"/>
    </reaction>
</comment>
<comment type="pathway">
    <text evidence="1">Carbohydrate metabolism; pentose and glucuronate interconversion.</text>
</comment>
<comment type="similarity">
    <text evidence="1">Belongs to the metallo-dependent hydrolases superfamily. Uronate isomerase family.</text>
</comment>
<protein>
    <recommendedName>
        <fullName evidence="1">Uronate isomerase</fullName>
        <ecNumber evidence="1">5.3.1.12</ecNumber>
    </recommendedName>
    <alternativeName>
        <fullName evidence="1">Glucuronate isomerase</fullName>
    </alternativeName>
    <alternativeName>
        <fullName evidence="1">Uronic isomerase</fullName>
    </alternativeName>
</protein>
<reference key="1">
    <citation type="submission" date="2007-11" db="EMBL/GenBank/DDBJ databases">
        <title>The genome sequence of the hyperthermophilic bacterium Thermotoga neapolitana.</title>
        <authorList>
            <person name="Lim S.K."/>
            <person name="Kim J.S."/>
            <person name="Cha S.H."/>
            <person name="Park B.C."/>
            <person name="Lee D.S."/>
            <person name="Tae H.S."/>
            <person name="Kim S.-J."/>
            <person name="Kim J.J."/>
            <person name="Park K.J."/>
            <person name="Lee S.Y."/>
        </authorList>
    </citation>
    <scope>NUCLEOTIDE SEQUENCE [LARGE SCALE GENOMIC DNA]</scope>
    <source>
        <strain>ATCC 49049 / DSM 4359 / NBRC 107923 / NS-E</strain>
    </source>
</reference>
<dbReference type="EC" id="5.3.1.12" evidence="1"/>
<dbReference type="EMBL" id="CP000916">
    <property type="protein sequence ID" value="ACM22806.1"/>
    <property type="molecule type" value="Genomic_DNA"/>
</dbReference>
<dbReference type="RefSeq" id="WP_015919125.1">
    <property type="nucleotide sequence ID" value="NC_011978.1"/>
</dbReference>
<dbReference type="SMR" id="B9K773"/>
<dbReference type="STRING" id="309803.CTN_0630"/>
<dbReference type="KEGG" id="tna:CTN_0630"/>
<dbReference type="eggNOG" id="COG1904">
    <property type="taxonomic scope" value="Bacteria"/>
</dbReference>
<dbReference type="HOGENOM" id="CLU_044465_1_0_0"/>
<dbReference type="UniPathway" id="UPA00246"/>
<dbReference type="Proteomes" id="UP000000445">
    <property type="component" value="Chromosome"/>
</dbReference>
<dbReference type="GO" id="GO:0008880">
    <property type="term" value="F:glucuronate isomerase activity"/>
    <property type="evidence" value="ECO:0007669"/>
    <property type="project" value="UniProtKB-UniRule"/>
</dbReference>
<dbReference type="GO" id="GO:0019698">
    <property type="term" value="P:D-galacturonate catabolic process"/>
    <property type="evidence" value="ECO:0007669"/>
    <property type="project" value="TreeGrafter"/>
</dbReference>
<dbReference type="GO" id="GO:0042840">
    <property type="term" value="P:D-glucuronate catabolic process"/>
    <property type="evidence" value="ECO:0007669"/>
    <property type="project" value="TreeGrafter"/>
</dbReference>
<dbReference type="Gene3D" id="3.20.20.140">
    <property type="entry name" value="Metal-dependent hydrolases"/>
    <property type="match status" value="1"/>
</dbReference>
<dbReference type="Gene3D" id="1.10.2020.10">
    <property type="entry name" value="uronate isomerase, domain 2, chain A"/>
    <property type="match status" value="1"/>
</dbReference>
<dbReference type="HAMAP" id="MF_00675">
    <property type="entry name" value="UxaC"/>
    <property type="match status" value="1"/>
</dbReference>
<dbReference type="InterPro" id="IPR032466">
    <property type="entry name" value="Metal_Hydrolase"/>
</dbReference>
<dbReference type="InterPro" id="IPR003766">
    <property type="entry name" value="Uronate_isomerase"/>
</dbReference>
<dbReference type="NCBIfam" id="NF002794">
    <property type="entry name" value="PRK02925.1"/>
    <property type="match status" value="1"/>
</dbReference>
<dbReference type="PANTHER" id="PTHR30068">
    <property type="entry name" value="URONATE ISOMERASE"/>
    <property type="match status" value="1"/>
</dbReference>
<dbReference type="PANTHER" id="PTHR30068:SF4">
    <property type="entry name" value="URONATE ISOMERASE"/>
    <property type="match status" value="1"/>
</dbReference>
<dbReference type="Pfam" id="PF02614">
    <property type="entry name" value="UxaC"/>
    <property type="match status" value="1"/>
</dbReference>
<dbReference type="SUPFAM" id="SSF51556">
    <property type="entry name" value="Metallo-dependent hydrolases"/>
    <property type="match status" value="1"/>
</dbReference>